<dbReference type="EC" id="2.7.7.6" evidence="1"/>
<dbReference type="EMBL" id="AP006728">
    <property type="protein sequence ID" value="BAD26770.1"/>
    <property type="molecule type" value="Genomic_DNA"/>
</dbReference>
<dbReference type="RefSeq" id="YP_052741.1">
    <property type="nucleotide sequence ID" value="NC_005973.1"/>
</dbReference>
<dbReference type="SMR" id="Q6ENI2"/>
<dbReference type="STRING" id="4536.Q6ENI2"/>
<dbReference type="GeneID" id="2885930"/>
<dbReference type="eggNOG" id="ENOG502QPYA">
    <property type="taxonomic scope" value="Eukaryota"/>
</dbReference>
<dbReference type="Proteomes" id="UP000006591">
    <property type="component" value="Chloroplast"/>
</dbReference>
<dbReference type="GO" id="GO:0009507">
    <property type="term" value="C:chloroplast"/>
    <property type="evidence" value="ECO:0007669"/>
    <property type="project" value="UniProtKB-SubCell"/>
</dbReference>
<dbReference type="GO" id="GO:0000428">
    <property type="term" value="C:DNA-directed RNA polymerase complex"/>
    <property type="evidence" value="ECO:0007669"/>
    <property type="project" value="UniProtKB-KW"/>
</dbReference>
<dbReference type="GO" id="GO:0005739">
    <property type="term" value="C:mitochondrion"/>
    <property type="evidence" value="ECO:0007669"/>
    <property type="project" value="GOC"/>
</dbReference>
<dbReference type="GO" id="GO:0009536">
    <property type="term" value="C:plastid"/>
    <property type="evidence" value="ECO:0000305"/>
    <property type="project" value="Gramene"/>
</dbReference>
<dbReference type="GO" id="GO:0003677">
    <property type="term" value="F:DNA binding"/>
    <property type="evidence" value="ECO:0007669"/>
    <property type="project" value="UniProtKB-UniRule"/>
</dbReference>
<dbReference type="GO" id="GO:0003899">
    <property type="term" value="F:DNA-directed RNA polymerase activity"/>
    <property type="evidence" value="ECO:0007669"/>
    <property type="project" value="UniProtKB-UniRule"/>
</dbReference>
<dbReference type="GO" id="GO:0008270">
    <property type="term" value="F:zinc ion binding"/>
    <property type="evidence" value="ECO:0007669"/>
    <property type="project" value="UniProtKB-UniRule"/>
</dbReference>
<dbReference type="GO" id="GO:0006351">
    <property type="term" value="P:DNA-templated transcription"/>
    <property type="evidence" value="ECO:0007669"/>
    <property type="project" value="UniProtKB-UniRule"/>
</dbReference>
<dbReference type="CDD" id="cd02655">
    <property type="entry name" value="RNAP_beta'_C"/>
    <property type="match status" value="1"/>
</dbReference>
<dbReference type="Gene3D" id="1.10.132.30">
    <property type="match status" value="1"/>
</dbReference>
<dbReference type="Gene3D" id="1.10.150.390">
    <property type="match status" value="1"/>
</dbReference>
<dbReference type="Gene3D" id="1.10.1790.20">
    <property type="match status" value="1"/>
</dbReference>
<dbReference type="Gene3D" id="1.10.274.100">
    <property type="entry name" value="RNA polymerase Rpb1, domain 3"/>
    <property type="match status" value="1"/>
</dbReference>
<dbReference type="HAMAP" id="MF_01324">
    <property type="entry name" value="RNApol_bact_RpoC2"/>
    <property type="match status" value="1"/>
</dbReference>
<dbReference type="InterPro" id="IPR012756">
    <property type="entry name" value="DNA-dir_RpoC2_beta_pp"/>
</dbReference>
<dbReference type="InterPro" id="IPR050254">
    <property type="entry name" value="RNA_pol_beta''_euk"/>
</dbReference>
<dbReference type="InterPro" id="IPR042102">
    <property type="entry name" value="RNA_pol_Rpb1_3_sf"/>
</dbReference>
<dbReference type="InterPro" id="IPR007083">
    <property type="entry name" value="RNA_pol_Rpb1_4"/>
</dbReference>
<dbReference type="InterPro" id="IPR007081">
    <property type="entry name" value="RNA_pol_Rpb1_5"/>
</dbReference>
<dbReference type="InterPro" id="IPR038120">
    <property type="entry name" value="Rpb1_funnel_sf"/>
</dbReference>
<dbReference type="NCBIfam" id="TIGR02388">
    <property type="entry name" value="rpoC2_cyan"/>
    <property type="match status" value="1"/>
</dbReference>
<dbReference type="PANTHER" id="PTHR34995">
    <property type="entry name" value="DNA-DIRECTED RNA POLYMERASE SUBUNIT BETA"/>
    <property type="match status" value="1"/>
</dbReference>
<dbReference type="PANTHER" id="PTHR34995:SF1">
    <property type="entry name" value="DNA-DIRECTED RNA POLYMERASE SUBUNIT BETA"/>
    <property type="match status" value="1"/>
</dbReference>
<dbReference type="Pfam" id="PF05000">
    <property type="entry name" value="RNA_pol_Rpb1_4"/>
    <property type="match status" value="1"/>
</dbReference>
<dbReference type="Pfam" id="PF04998">
    <property type="entry name" value="RNA_pol_Rpb1_5"/>
    <property type="match status" value="2"/>
</dbReference>
<dbReference type="SUPFAM" id="SSF64484">
    <property type="entry name" value="beta and beta-prime subunits of DNA dependent RNA-polymerase"/>
    <property type="match status" value="1"/>
</dbReference>
<comment type="function">
    <text evidence="1">DNA-dependent RNA polymerase catalyzes the transcription of DNA into RNA using the four ribonucleoside triphosphates as substrates.</text>
</comment>
<comment type="catalytic activity">
    <reaction evidence="1">
        <text>RNA(n) + a ribonucleoside 5'-triphosphate = RNA(n+1) + diphosphate</text>
        <dbReference type="Rhea" id="RHEA:21248"/>
        <dbReference type="Rhea" id="RHEA-COMP:14527"/>
        <dbReference type="Rhea" id="RHEA-COMP:17342"/>
        <dbReference type="ChEBI" id="CHEBI:33019"/>
        <dbReference type="ChEBI" id="CHEBI:61557"/>
        <dbReference type="ChEBI" id="CHEBI:140395"/>
        <dbReference type="EC" id="2.7.7.6"/>
    </reaction>
</comment>
<comment type="cofactor">
    <cofactor evidence="1">
        <name>Zn(2+)</name>
        <dbReference type="ChEBI" id="CHEBI:29105"/>
    </cofactor>
    <text evidence="1">Binds 1 Zn(2+) ion per subunit.</text>
</comment>
<comment type="subunit">
    <text evidence="1">In plastids the minimal PEP RNA polymerase catalytic core is composed of four subunits: alpha, beta, beta', and beta''. When a (nuclear-encoded) sigma factor is associated with the core the holoenzyme is formed, which can initiate transcription.</text>
</comment>
<comment type="subcellular location">
    <subcellularLocation>
        <location evidence="1">Plastid</location>
        <location evidence="1">Chloroplast</location>
    </subcellularLocation>
</comment>
<comment type="similarity">
    <text evidence="1">Belongs to the RNA polymerase beta' chain family. RpoC2 subfamily.</text>
</comment>
<evidence type="ECO:0000255" key="1">
    <source>
        <dbReference type="HAMAP-Rule" id="MF_01324"/>
    </source>
</evidence>
<evidence type="ECO:0000256" key="2">
    <source>
        <dbReference type="SAM" id="MobiDB-lite"/>
    </source>
</evidence>
<evidence type="ECO:0000312" key="3">
    <source>
        <dbReference type="Proteomes" id="UP000006591"/>
    </source>
</evidence>
<feature type="chain" id="PRO_0000067936" description="DNA-directed RNA polymerase subunit beta''">
    <location>
        <begin position="1"/>
        <end position="1513"/>
    </location>
</feature>
<feature type="region of interest" description="Disordered" evidence="2">
    <location>
        <begin position="644"/>
        <end position="769"/>
    </location>
</feature>
<feature type="compositionally biased region" description="Basic and acidic residues" evidence="2">
    <location>
        <begin position="659"/>
        <end position="679"/>
    </location>
</feature>
<feature type="compositionally biased region" description="Acidic residues" evidence="2">
    <location>
        <begin position="680"/>
        <end position="707"/>
    </location>
</feature>
<feature type="compositionally biased region" description="Basic and acidic residues" evidence="2">
    <location>
        <begin position="726"/>
        <end position="737"/>
    </location>
</feature>
<feature type="compositionally biased region" description="Acidic residues" evidence="2">
    <location>
        <begin position="738"/>
        <end position="767"/>
    </location>
</feature>
<feature type="binding site" evidence="1">
    <location>
        <position position="220"/>
    </location>
    <ligand>
        <name>Zn(2+)</name>
        <dbReference type="ChEBI" id="CHEBI:29105"/>
    </ligand>
</feature>
<feature type="binding site" evidence="1">
    <location>
        <position position="296"/>
    </location>
    <ligand>
        <name>Zn(2+)</name>
        <dbReference type="ChEBI" id="CHEBI:29105"/>
    </ligand>
</feature>
<feature type="binding site" evidence="1">
    <location>
        <position position="303"/>
    </location>
    <ligand>
        <name>Zn(2+)</name>
        <dbReference type="ChEBI" id="CHEBI:29105"/>
    </ligand>
</feature>
<feature type="binding site" evidence="1">
    <location>
        <position position="306"/>
    </location>
    <ligand>
        <name>Zn(2+)</name>
        <dbReference type="ChEBI" id="CHEBI:29105"/>
    </ligand>
</feature>
<keyword id="KW-0150">Chloroplast</keyword>
<keyword id="KW-0240">DNA-directed RNA polymerase</keyword>
<keyword id="KW-0479">Metal-binding</keyword>
<keyword id="KW-0548">Nucleotidyltransferase</keyword>
<keyword id="KW-0934">Plastid</keyword>
<keyword id="KW-1185">Reference proteome</keyword>
<keyword id="KW-0804">Transcription</keyword>
<keyword id="KW-0808">Transferase</keyword>
<keyword id="KW-0862">Zinc</keyword>
<geneLocation type="chloroplast"/>
<gene>
    <name evidence="1" type="primary">rpoC2</name>
</gene>
<sequence>MAERANLVFQNKEIDGTAMKRLISRLIDHFGMGYTSHILDQIKTLGFHQATTTSISLGIEDLLTIPSKGWLVQDAEQQSFLLEKHYYYGAVHAVEKLRQSVEIWYATSEYLKHEMNSNFRITDPSNPVYLMSFSGARGNASQVHQLVGMRGLMADPQGQMIDLPIQSNLREGLSLTEYIISCYGARKGVVDTAVRTADAGYLTRRLVEVVQHIIVRRRDCGTIQAISVSPQNGMTEKLFVQTLIGRVLANDIYIGSRCIATRNQDIGIGLVNRFITTFRAQPFRAQPIYIRTPFTCRSTSWICQLCYGRSSTHGDLVELGEAVGVIAGQSIGEPGTQLTLRTFHTGGVFTGGTADLVRSPSNGKIQFNGDLVHPTRTRHGQPAFLCYIDLHITIQSQDILHSVTIPSKSLILVQNDQYVESEQVIAEIRAGTSALHFKEKVQKHIYSESDGEMHWSTDVYHAPEYQYGNLRRLPKTSHLWILSVSMCRSSIASFSLHKDQDQMNTYSFSVDGRYIFGLSMADDEVRHRLLDTFGKKDREILDYSTPDRIMSNGHWNFVYPSILQNNFDLLAKKRRNRFAIPLQYHQEQEKEPISCFGISIEIPFMGVLRRNTIVAYFDDPRYKKDKKGSGIVKFRYRTLEDEYRTREKDSENEYGSPENEYRTREEECKTLEDEYRTREEEYETLEDEYGIPENEYETLEDEYGILEDEYRTREEESEDEYGSPENKYRPREDKYGTLEEDSEDEHGTLEEDSEEDSEDEYGNPEEDSVLKKGVLIEHRGTKEFSLKYQKEVDRFFFILQELHILPRSSSLKVLDNSIIGVDTQLTKNTRSRLGGLVRVKRKKSHTELKIFSGDIHFPEEADKILGGSLIPLEREKKDSKESKKRENWVYVQWKKILKSKEKYFVLVRPAVAYEMNEGRNLATLFPQDLLQEEGNLQLRLVNFISHENSKLTQRIYHTNSQFVRTCLVLNWEQEEKEEARASLVEIRANGLIRDFLRIGLIKSTISYTRKRYDSRSAGLILHNRLDRTNTNSFYSKAKIQSLSQHQEAIGTLLNRNKEYQSLMVLSASNCSRIGFFKNSKNPNGVKESNPRIPIPKFFGLFRNFSGLLGTIAPSISNFSSSYYLLTYNQILLKKHLLLDNLKQNFKVLQGLKHSLINENQRTSNFDSNIMLDPFQLNWHFLPHDSWEETSAKIHLGQFICENVCLFKSHIKKSGQIFIVNIDSFVIRAAKPYLATTGATVHGHYGEILYKGDRLVTFIYEKARSSDITQGLPKVEQIFEARSIDSLSPNLERRIEDWNERIPRILGGPWGFLIGAELTIAQSRISLVNKIQKVYRSQGVQIHNRHIEIIIRQVTSKVRVSEDGMSNVFSPGELIGLLRAERAGRALDESIYYRAILLGITRVSLNTQSFISEASFQETARVLAKAALRGRIDWLKGLKENVVLGGIIPVGTGFQKFVHRYPQDKNLYFEIQKKKLFASEMRDILFLHTELVSSDSDVTNNFYETSESPFTPFI</sequence>
<reference key="1">
    <citation type="journal article" date="2004" name="Gene">
        <title>The complete nucleotide sequence of wild rice (Oryza nivara) chloroplast genome: first genome wide comparative sequence analysis of wild and cultivated rice.</title>
        <authorList>
            <person name="Masood M.S."/>
            <person name="Nishikawa T."/>
            <person name="Fukuoka S."/>
            <person name="Njenga P.K."/>
            <person name="Tsudzuki T."/>
            <person name="Kadowaki K."/>
        </authorList>
    </citation>
    <scope>NUCLEOTIDE SEQUENCE [LARGE SCALE GENOMIC DNA]</scope>
    <source>
        <strain evidence="3">cv. SL10</strain>
    </source>
</reference>
<protein>
    <recommendedName>
        <fullName evidence="1">DNA-directed RNA polymerase subunit beta''</fullName>
        <ecNumber evidence="1">2.7.7.6</ecNumber>
    </recommendedName>
    <alternativeName>
        <fullName evidence="1">PEP</fullName>
    </alternativeName>
    <alternativeName>
        <fullName evidence="1">Plastid-encoded RNA polymerase subunit beta''</fullName>
        <shortName evidence="1">RNA polymerase subunit beta''</shortName>
    </alternativeName>
</protein>
<organism>
    <name type="scientific">Oryza nivara</name>
    <name type="common">Indian wild rice</name>
    <name type="synonym">Oryza sativa f. spontanea</name>
    <dbReference type="NCBI Taxonomy" id="4536"/>
    <lineage>
        <taxon>Eukaryota</taxon>
        <taxon>Viridiplantae</taxon>
        <taxon>Streptophyta</taxon>
        <taxon>Embryophyta</taxon>
        <taxon>Tracheophyta</taxon>
        <taxon>Spermatophyta</taxon>
        <taxon>Magnoliopsida</taxon>
        <taxon>Liliopsida</taxon>
        <taxon>Poales</taxon>
        <taxon>Poaceae</taxon>
        <taxon>BOP clade</taxon>
        <taxon>Oryzoideae</taxon>
        <taxon>Oryzeae</taxon>
        <taxon>Oryzinae</taxon>
        <taxon>Oryza</taxon>
    </lineage>
</organism>
<accession>Q6ENI2</accession>
<name>RPOC2_ORYNI</name>
<proteinExistence type="inferred from homology"/>